<organism>
    <name type="scientific">Pinus koraiensis</name>
    <name type="common">Korean pine</name>
    <dbReference type="NCBI Taxonomy" id="88728"/>
    <lineage>
        <taxon>Eukaryota</taxon>
        <taxon>Viridiplantae</taxon>
        <taxon>Streptophyta</taxon>
        <taxon>Embryophyta</taxon>
        <taxon>Tracheophyta</taxon>
        <taxon>Spermatophyta</taxon>
        <taxon>Pinopsida</taxon>
        <taxon>Pinidae</taxon>
        <taxon>Conifers I</taxon>
        <taxon>Pinales</taxon>
        <taxon>Pinaceae</taxon>
        <taxon>Pinus</taxon>
        <taxon>Pinus subgen. Strobus</taxon>
    </lineage>
</organism>
<gene>
    <name evidence="1" type="primary">psbC</name>
</gene>
<protein>
    <recommendedName>
        <fullName evidence="1">Photosystem II CP43 reaction center protein</fullName>
    </recommendedName>
    <alternativeName>
        <fullName evidence="1">PSII 43 kDa protein</fullName>
    </alternativeName>
    <alternativeName>
        <fullName evidence="1">Protein CP-43</fullName>
    </alternativeName>
</protein>
<reference key="1">
    <citation type="submission" date="2003-02" db="EMBL/GenBank/DDBJ databases">
        <title>Complete nucleotide sequence of Pinus koraiensis.</title>
        <authorList>
            <person name="Noh E.W."/>
            <person name="Lee J.S."/>
            <person name="Choi Y.I."/>
            <person name="Han M.S."/>
            <person name="Yi Y.S."/>
            <person name="Han S.U."/>
        </authorList>
    </citation>
    <scope>NUCLEOTIDE SEQUENCE [LARGE SCALE GENOMIC DNA]</scope>
    <source>
        <strain>KangWon16</strain>
    </source>
</reference>
<accession>Q85WW6</accession>
<comment type="function">
    <text evidence="1">One of the components of the core complex of photosystem II (PSII). It binds chlorophyll and helps catalyze the primary light-induced photochemical processes of PSII. PSII is a light-driven water:plastoquinone oxidoreductase, using light energy to abstract electrons from H(2)O, generating O(2) and a proton gradient subsequently used for ATP formation.</text>
</comment>
<comment type="cofactor">
    <text evidence="1">Binds multiple chlorophylls and provides some of the ligands for the Ca-4Mn-5O cluster of the oxygen-evolving complex. It may also provide a ligand for a Cl- that is required for oxygen evolution. PSII binds additional chlorophylls, carotenoids and specific lipids.</text>
</comment>
<comment type="subunit">
    <text evidence="1">PSII is composed of 1 copy each of membrane proteins PsbA, PsbB, PsbC, PsbD, PsbE, PsbF, PsbH, PsbI, PsbJ, PsbK, PsbL, PsbM, PsbT, PsbX, PsbY, PsbZ, Psb30/Ycf12, at least 3 peripheral proteins of the oxygen-evolving complex and a large number of cofactors. It forms dimeric complexes.</text>
</comment>
<comment type="subcellular location">
    <subcellularLocation>
        <location evidence="1">Plastid</location>
        <location evidence="1">Chloroplast thylakoid membrane</location>
        <topology evidence="1">Multi-pass membrane protein</topology>
    </subcellularLocation>
</comment>
<comment type="similarity">
    <text evidence="1">Belongs to the PsbB/PsbC family. PsbC subfamily.</text>
</comment>
<feature type="propeptide" id="PRO_0000431194" evidence="1">
    <location>
        <begin position="1"/>
        <end position="14"/>
    </location>
</feature>
<feature type="chain" id="PRO_0000277438" description="Photosystem II CP43 reaction center protein" evidence="1">
    <location>
        <begin position="15"/>
        <end position="473"/>
    </location>
</feature>
<feature type="transmembrane region" description="Helical" evidence="1">
    <location>
        <begin position="69"/>
        <end position="93"/>
    </location>
</feature>
<feature type="transmembrane region" description="Helical" evidence="1">
    <location>
        <begin position="134"/>
        <end position="155"/>
    </location>
</feature>
<feature type="transmembrane region" description="Helical" evidence="1">
    <location>
        <begin position="178"/>
        <end position="200"/>
    </location>
</feature>
<feature type="transmembrane region" description="Helical" evidence="1">
    <location>
        <begin position="255"/>
        <end position="275"/>
    </location>
</feature>
<feature type="transmembrane region" description="Helical" evidence="1">
    <location>
        <begin position="291"/>
        <end position="312"/>
    </location>
</feature>
<feature type="transmembrane region" description="Helical" evidence="1">
    <location>
        <begin position="447"/>
        <end position="471"/>
    </location>
</feature>
<feature type="binding site" evidence="1">
    <location>
        <position position="367"/>
    </location>
    <ligand>
        <name>[CaMn4O5] cluster</name>
        <dbReference type="ChEBI" id="CHEBI:189552"/>
    </ligand>
</feature>
<feature type="modified residue" description="N-acetylthreonine" evidence="1">
    <location>
        <position position="15"/>
    </location>
</feature>
<feature type="modified residue" description="Phosphothreonine" evidence="1">
    <location>
        <position position="15"/>
    </location>
</feature>
<name>PSBC_PINKO</name>
<evidence type="ECO:0000255" key="1">
    <source>
        <dbReference type="HAMAP-Rule" id="MF_01496"/>
    </source>
</evidence>
<geneLocation type="chloroplast"/>
<keyword id="KW-0007">Acetylation</keyword>
<keyword id="KW-0148">Chlorophyll</keyword>
<keyword id="KW-0150">Chloroplast</keyword>
<keyword id="KW-0157">Chromophore</keyword>
<keyword id="KW-0464">Manganese</keyword>
<keyword id="KW-0472">Membrane</keyword>
<keyword id="KW-0479">Metal-binding</keyword>
<keyword id="KW-0597">Phosphoprotein</keyword>
<keyword id="KW-0602">Photosynthesis</keyword>
<keyword id="KW-0604">Photosystem II</keyword>
<keyword id="KW-0934">Plastid</keyword>
<keyword id="KW-0793">Thylakoid</keyword>
<keyword id="KW-0812">Transmembrane</keyword>
<keyword id="KW-1133">Transmembrane helix</keyword>
<sequence length="473" mass="51799">MKTLYSLRRSYPVETLFNGTIALAGRDQETTGFAWWAGNARLINLSGKLLGAHVAHAGLIVFWAGAMNLFEVAHFVPEKPMYEQGLILLPHLATLGWGVGPGGEIVDTFPYFVSGVLHLISSAVLGFGGIYHALIGPETLEESFPFFGYVWKDRNKMTTILGIHLILLGVGAFLPVLKALYFGGVYDTWAPGGGDVRKITNPTLNPSAIFGYLLKSPFGGEGWIVSVDNLEDVIGGHVWLGSICIFGGIWHILTKPFAWARRAFVWSGEAYLSYSLAALSLFGFIACCFVWFNNTVYPSEFYGPTGPEASQAQAFTFLVRDQRLGASVGSAQGPTGLGKYLMRSPTGEIIFGGETMRFWDLRAPWLEPLRGPNGLDLSKLKKDIQPWQERRSAEYMTHAPLGSLNSVGGVATEINAVNYVSPRSWLSTSHFVLGFFFFVGHLWHAGRARAAAAGFEKGIDRDFEPVLSMTPLN</sequence>
<proteinExistence type="inferred from homology"/>
<dbReference type="EMBL" id="AY228468">
    <property type="protein sequence ID" value="AAO74103.1"/>
    <property type="molecule type" value="Genomic_DNA"/>
</dbReference>
<dbReference type="RefSeq" id="NP_817258.1">
    <property type="nucleotide sequence ID" value="NC_004677.2"/>
</dbReference>
<dbReference type="SMR" id="Q85WW6"/>
<dbReference type="GeneID" id="806938"/>
<dbReference type="GO" id="GO:0009535">
    <property type="term" value="C:chloroplast thylakoid membrane"/>
    <property type="evidence" value="ECO:0007669"/>
    <property type="project" value="UniProtKB-SubCell"/>
</dbReference>
<dbReference type="GO" id="GO:0009523">
    <property type="term" value="C:photosystem II"/>
    <property type="evidence" value="ECO:0007669"/>
    <property type="project" value="UniProtKB-KW"/>
</dbReference>
<dbReference type="GO" id="GO:0016168">
    <property type="term" value="F:chlorophyll binding"/>
    <property type="evidence" value="ECO:0007669"/>
    <property type="project" value="UniProtKB-UniRule"/>
</dbReference>
<dbReference type="GO" id="GO:0045156">
    <property type="term" value="F:electron transporter, transferring electrons within the cyclic electron transport pathway of photosynthesis activity"/>
    <property type="evidence" value="ECO:0007669"/>
    <property type="project" value="InterPro"/>
</dbReference>
<dbReference type="GO" id="GO:0046872">
    <property type="term" value="F:metal ion binding"/>
    <property type="evidence" value="ECO:0007669"/>
    <property type="project" value="UniProtKB-KW"/>
</dbReference>
<dbReference type="GO" id="GO:0009772">
    <property type="term" value="P:photosynthetic electron transport in photosystem II"/>
    <property type="evidence" value="ECO:0007669"/>
    <property type="project" value="InterPro"/>
</dbReference>
<dbReference type="FunFam" id="1.10.10.670:FF:000001">
    <property type="entry name" value="Photosystem II CP43 reaction center protein"/>
    <property type="match status" value="1"/>
</dbReference>
<dbReference type="Gene3D" id="1.10.10.670">
    <property type="entry name" value="photosystem ii from thermosynechococcus elongatus"/>
    <property type="match status" value="1"/>
</dbReference>
<dbReference type="HAMAP" id="MF_01496">
    <property type="entry name" value="PSII_PsbC_CP43"/>
    <property type="match status" value="1"/>
</dbReference>
<dbReference type="InterPro" id="IPR000932">
    <property type="entry name" value="PS_antenna-like"/>
</dbReference>
<dbReference type="InterPro" id="IPR036001">
    <property type="entry name" value="PS_II_antenna-like_sf"/>
</dbReference>
<dbReference type="InterPro" id="IPR005869">
    <property type="entry name" value="PSII_PsbC"/>
</dbReference>
<dbReference type="InterPro" id="IPR044900">
    <property type="entry name" value="PSII_PsbC_sf"/>
</dbReference>
<dbReference type="NCBIfam" id="TIGR01153">
    <property type="entry name" value="psbC"/>
    <property type="match status" value="1"/>
</dbReference>
<dbReference type="Pfam" id="PF00421">
    <property type="entry name" value="PSII"/>
    <property type="match status" value="1"/>
</dbReference>
<dbReference type="SUPFAM" id="SSF161077">
    <property type="entry name" value="Photosystem II antenna protein-like"/>
    <property type="match status" value="1"/>
</dbReference>